<proteinExistence type="inferred from homology"/>
<reference key="1">
    <citation type="journal article" date="2009" name="ISME J.">
        <title>The genome sequence of the psychrophilic archaeon, Methanococcoides burtonii: the role of genome evolution in cold adaptation.</title>
        <authorList>
            <person name="Allen M.A."/>
            <person name="Lauro F.M."/>
            <person name="Williams T.J."/>
            <person name="Burg D."/>
            <person name="Siddiqui K.S."/>
            <person name="De Francisci D."/>
            <person name="Chong K.W."/>
            <person name="Pilak O."/>
            <person name="Chew H.H."/>
            <person name="De Maere M.Z."/>
            <person name="Ting L."/>
            <person name="Katrib M."/>
            <person name="Ng C."/>
            <person name="Sowers K.R."/>
            <person name="Galperin M.Y."/>
            <person name="Anderson I.J."/>
            <person name="Ivanova N."/>
            <person name="Dalin E."/>
            <person name="Martinez M."/>
            <person name="Lapidus A."/>
            <person name="Hauser L."/>
            <person name="Land M."/>
            <person name="Thomas T."/>
            <person name="Cavicchioli R."/>
        </authorList>
    </citation>
    <scope>NUCLEOTIDE SEQUENCE [LARGE SCALE GENOMIC DNA]</scope>
    <source>
        <strain>DSM 6242 / NBRC 107633 / OCM 468 / ACE-M</strain>
    </source>
</reference>
<organism>
    <name type="scientific">Methanococcoides burtonii (strain DSM 6242 / NBRC 107633 / OCM 468 / ACE-M)</name>
    <dbReference type="NCBI Taxonomy" id="259564"/>
    <lineage>
        <taxon>Archaea</taxon>
        <taxon>Methanobacteriati</taxon>
        <taxon>Methanobacteriota</taxon>
        <taxon>Stenosarchaea group</taxon>
        <taxon>Methanomicrobia</taxon>
        <taxon>Methanosarcinales</taxon>
        <taxon>Methanosarcinaceae</taxon>
        <taxon>Methanococcoides</taxon>
    </lineage>
</organism>
<evidence type="ECO:0000255" key="1">
    <source>
        <dbReference type="HAMAP-Rule" id="MF_01079"/>
    </source>
</evidence>
<sequence>MKEHFQLKETIVTIVADDQSYIELAKESIAVHRLKLEEYIRSDPYFKVTLEPYECSSDAPEVVKRLVAAGNSVGIGPMSAVAGTIAALAVGSMVDAGATSAIVDNGGDIAFLNDRPIVIGIYAGQSSIRNIGFTLEPSDHIRGICTSSGTVGPSINFGCADAAVVFSDDVSLADSAATELSNATGIGHEGVENAFDTISSIINIDGAVVIQGEHMGMWGTIPQITRADMQYECITKG</sequence>
<name>Y309_METBU</name>
<protein>
    <recommendedName>
        <fullName evidence="1">UPF0280 protein Mbur_0309</fullName>
    </recommendedName>
</protein>
<accession>Q12Z15</accession>
<gene>
    <name type="ordered locus">Mbur_0309</name>
</gene>
<feature type="chain" id="PRO_0000366700" description="UPF0280 protein Mbur_0309">
    <location>
        <begin position="1"/>
        <end position="237"/>
    </location>
</feature>
<dbReference type="EMBL" id="CP000300">
    <property type="protein sequence ID" value="ABE51311.1"/>
    <property type="molecule type" value="Genomic_DNA"/>
</dbReference>
<dbReference type="RefSeq" id="WP_011498473.1">
    <property type="nucleotide sequence ID" value="NC_007955.1"/>
</dbReference>
<dbReference type="SMR" id="Q12Z15"/>
<dbReference type="STRING" id="259564.Mbur_0309"/>
<dbReference type="GeneID" id="3997125"/>
<dbReference type="KEGG" id="mbu:Mbur_0309"/>
<dbReference type="HOGENOM" id="CLU_074757_0_0_2"/>
<dbReference type="OrthoDB" id="50299at2157"/>
<dbReference type="Proteomes" id="UP000001979">
    <property type="component" value="Chromosome"/>
</dbReference>
<dbReference type="Gene3D" id="3.10.520.10">
    <property type="entry name" value="ApbE-like domains"/>
    <property type="match status" value="1"/>
</dbReference>
<dbReference type="HAMAP" id="MF_01079">
    <property type="entry name" value="UPF0280"/>
    <property type="match status" value="1"/>
</dbReference>
<dbReference type="InterPro" id="IPR003374">
    <property type="entry name" value="ApbE-like_sf"/>
</dbReference>
<dbReference type="InterPro" id="IPR037456">
    <property type="entry name" value="MA1715-like"/>
</dbReference>
<dbReference type="InterPro" id="IPR007183">
    <property type="entry name" value="UPF0280"/>
</dbReference>
<dbReference type="NCBIfam" id="NF003324">
    <property type="entry name" value="PRK04334.1-4"/>
    <property type="match status" value="1"/>
</dbReference>
<dbReference type="PIRSF" id="PIRSF006421">
    <property type="entry name" value="UCP006421"/>
    <property type="match status" value="1"/>
</dbReference>
<dbReference type="SUPFAM" id="SSF143631">
    <property type="entry name" value="ApbE-like"/>
    <property type="match status" value="1"/>
</dbReference>
<comment type="similarity">
    <text evidence="1">Belongs to the UPF0280 family.</text>
</comment>